<accession>B1JHY0</accession>
<reference key="1">
    <citation type="submission" date="2008-02" db="EMBL/GenBank/DDBJ databases">
        <title>Complete sequence of Yersinia pseudotuberculosis YPIII.</title>
        <authorList>
            <consortium name="US DOE Joint Genome Institute"/>
            <person name="Copeland A."/>
            <person name="Lucas S."/>
            <person name="Lapidus A."/>
            <person name="Glavina del Rio T."/>
            <person name="Dalin E."/>
            <person name="Tice H."/>
            <person name="Bruce D."/>
            <person name="Goodwin L."/>
            <person name="Pitluck S."/>
            <person name="Munk A.C."/>
            <person name="Brettin T."/>
            <person name="Detter J.C."/>
            <person name="Han C."/>
            <person name="Tapia R."/>
            <person name="Schmutz J."/>
            <person name="Larimer F."/>
            <person name="Land M."/>
            <person name="Hauser L."/>
            <person name="Challacombe J.F."/>
            <person name="Green L."/>
            <person name="Lindler L.E."/>
            <person name="Nikolich M.P."/>
            <person name="Richardson P."/>
        </authorList>
    </citation>
    <scope>NUCLEOTIDE SEQUENCE [LARGE SCALE GENOMIC DNA]</scope>
    <source>
        <strain>YPIII</strain>
    </source>
</reference>
<name>GLGA_YERPY</name>
<proteinExistence type="inferred from homology"/>
<feature type="chain" id="PRO_1000126115" description="Glycogen synthase">
    <location>
        <begin position="1"/>
        <end position="476"/>
    </location>
</feature>
<feature type="binding site" evidence="1">
    <location>
        <position position="15"/>
    </location>
    <ligand>
        <name>ADP-alpha-D-glucose</name>
        <dbReference type="ChEBI" id="CHEBI:57498"/>
    </ligand>
</feature>
<evidence type="ECO:0000255" key="1">
    <source>
        <dbReference type="HAMAP-Rule" id="MF_00484"/>
    </source>
</evidence>
<keyword id="KW-0320">Glycogen biosynthesis</keyword>
<keyword id="KW-0328">Glycosyltransferase</keyword>
<keyword id="KW-0808">Transferase</keyword>
<protein>
    <recommendedName>
        <fullName evidence="1">Glycogen synthase</fullName>
        <ecNumber evidence="1">2.4.1.21</ecNumber>
    </recommendedName>
    <alternativeName>
        <fullName evidence="1">Starch [bacterial glycogen] synthase</fullName>
    </alternativeName>
</protein>
<sequence length="476" mass="52276">MRVLHVCSELFPLLKTGGLADVIGALPAAQLAEGADVRIILPAFPDLRRGIPETVLVREIDTFAGRVALRYGHYRGIGIYLIDAPALYDRAGSPYHDASLYAYSDNYLRFALLGWMACELACGLDGYWRPEVVHAHDWHAGLTCAYLAARGRPARSVFTVHNLAYQGLFSADHLSELHLPAEFFQIYGLEFYGQISYLKAGLFFADHVTTVSPTYAKEITQPAFGYGMEGLLQALARQGRLTGILNGVDSDIWDPQSDTLLPTRYDAENLQAKAINKTHLQTAMGLQLAENKPIFAVVSRLTVQKGLDLVLEALPELLALGGQLVVLGSGDATLQEAFLAAAAEHSGQVGVQIGYHEAFSHRIIAGSDVILVPSRFEPCGLTQLYGLKYGTLPLVRHTGGLADTVVDCALENLADGSASGFVFNECEAQALVKAIRRAFVLWSRPKHWRHVQRHAMRLDFGWQLAAVDYLSLYRRL</sequence>
<gene>
    <name evidence="1" type="primary">glgA</name>
    <name type="ordered locus">YPK_0150</name>
</gene>
<dbReference type="EC" id="2.4.1.21" evidence="1"/>
<dbReference type="EMBL" id="CP000950">
    <property type="protein sequence ID" value="ACA66463.1"/>
    <property type="molecule type" value="Genomic_DNA"/>
</dbReference>
<dbReference type="RefSeq" id="WP_002209498.1">
    <property type="nucleotide sequence ID" value="NZ_CP009792.1"/>
</dbReference>
<dbReference type="SMR" id="B1JHY0"/>
<dbReference type="CAZy" id="GT5">
    <property type="family name" value="Glycosyltransferase Family 5"/>
</dbReference>
<dbReference type="GeneID" id="57974765"/>
<dbReference type="KEGG" id="ypy:YPK_0150"/>
<dbReference type="PATRIC" id="fig|502800.11.peg.756"/>
<dbReference type="UniPathway" id="UPA00164"/>
<dbReference type="GO" id="GO:0005829">
    <property type="term" value="C:cytosol"/>
    <property type="evidence" value="ECO:0007669"/>
    <property type="project" value="TreeGrafter"/>
</dbReference>
<dbReference type="GO" id="GO:0009011">
    <property type="term" value="F:alpha-1,4-glucan glucosyltransferase (ADP-glucose donor) activity"/>
    <property type="evidence" value="ECO:0007669"/>
    <property type="project" value="UniProtKB-UniRule"/>
</dbReference>
<dbReference type="GO" id="GO:0004373">
    <property type="term" value="F:alpha-1,4-glucan glucosyltransferase (UDP-glucose donor) activity"/>
    <property type="evidence" value="ECO:0007669"/>
    <property type="project" value="InterPro"/>
</dbReference>
<dbReference type="GO" id="GO:0005978">
    <property type="term" value="P:glycogen biosynthetic process"/>
    <property type="evidence" value="ECO:0007669"/>
    <property type="project" value="UniProtKB-UniRule"/>
</dbReference>
<dbReference type="CDD" id="cd03791">
    <property type="entry name" value="GT5_Glycogen_synthase_DULL1-like"/>
    <property type="match status" value="1"/>
</dbReference>
<dbReference type="FunFam" id="3.40.50.2000:FF:000011">
    <property type="entry name" value="Glycogen synthase"/>
    <property type="match status" value="1"/>
</dbReference>
<dbReference type="Gene3D" id="3.40.50.2000">
    <property type="entry name" value="Glycogen Phosphorylase B"/>
    <property type="match status" value="2"/>
</dbReference>
<dbReference type="HAMAP" id="MF_00484">
    <property type="entry name" value="Glycogen_synth"/>
    <property type="match status" value="1"/>
</dbReference>
<dbReference type="InterPro" id="IPR001296">
    <property type="entry name" value="Glyco_trans_1"/>
</dbReference>
<dbReference type="InterPro" id="IPR011835">
    <property type="entry name" value="GS/SS"/>
</dbReference>
<dbReference type="InterPro" id="IPR013534">
    <property type="entry name" value="Starch_synth_cat_dom"/>
</dbReference>
<dbReference type="NCBIfam" id="TIGR02095">
    <property type="entry name" value="glgA"/>
    <property type="match status" value="1"/>
</dbReference>
<dbReference type="NCBIfam" id="NF001899">
    <property type="entry name" value="PRK00654.1-2"/>
    <property type="match status" value="1"/>
</dbReference>
<dbReference type="PANTHER" id="PTHR45825:SF11">
    <property type="entry name" value="ALPHA AMYLASE DOMAIN-CONTAINING PROTEIN"/>
    <property type="match status" value="1"/>
</dbReference>
<dbReference type="PANTHER" id="PTHR45825">
    <property type="entry name" value="GRANULE-BOUND STARCH SYNTHASE 1, CHLOROPLASTIC/AMYLOPLASTIC"/>
    <property type="match status" value="1"/>
</dbReference>
<dbReference type="Pfam" id="PF08323">
    <property type="entry name" value="Glyco_transf_5"/>
    <property type="match status" value="1"/>
</dbReference>
<dbReference type="Pfam" id="PF00534">
    <property type="entry name" value="Glycos_transf_1"/>
    <property type="match status" value="1"/>
</dbReference>
<dbReference type="SUPFAM" id="SSF53756">
    <property type="entry name" value="UDP-Glycosyltransferase/glycogen phosphorylase"/>
    <property type="match status" value="1"/>
</dbReference>
<comment type="function">
    <text evidence="1">Synthesizes alpha-1,4-glucan chains using ADP-glucose.</text>
</comment>
<comment type="catalytic activity">
    <reaction evidence="1">
        <text>[(1-&gt;4)-alpha-D-glucosyl](n) + ADP-alpha-D-glucose = [(1-&gt;4)-alpha-D-glucosyl](n+1) + ADP + H(+)</text>
        <dbReference type="Rhea" id="RHEA:18189"/>
        <dbReference type="Rhea" id="RHEA-COMP:9584"/>
        <dbReference type="Rhea" id="RHEA-COMP:9587"/>
        <dbReference type="ChEBI" id="CHEBI:15378"/>
        <dbReference type="ChEBI" id="CHEBI:15444"/>
        <dbReference type="ChEBI" id="CHEBI:57498"/>
        <dbReference type="ChEBI" id="CHEBI:456216"/>
        <dbReference type="EC" id="2.4.1.21"/>
    </reaction>
</comment>
<comment type="pathway">
    <text evidence="1">Glycan biosynthesis; glycogen biosynthesis.</text>
</comment>
<comment type="similarity">
    <text evidence="1">Belongs to the glycosyltransferase 1 family. Bacterial/plant glycogen synthase subfamily.</text>
</comment>
<organism>
    <name type="scientific">Yersinia pseudotuberculosis serotype O:3 (strain YPIII)</name>
    <dbReference type="NCBI Taxonomy" id="502800"/>
    <lineage>
        <taxon>Bacteria</taxon>
        <taxon>Pseudomonadati</taxon>
        <taxon>Pseudomonadota</taxon>
        <taxon>Gammaproteobacteria</taxon>
        <taxon>Enterobacterales</taxon>
        <taxon>Yersiniaceae</taxon>
        <taxon>Yersinia</taxon>
    </lineage>
</organism>